<name>Y8324_DICDI</name>
<sequence>MAEISKENEDNFIFKMKVLYNQMIHIPSMFSTLKTEFPLFFETDTTNIIHLPMTLQSKIIQKPTRGYCSKFIKMLTQTLERLDKEVNESILEKFLEIISPITPHQNDDGGDNNQSEDKTEYCWKSYYIQNKWITLKNENAYNLVGMTTWGAAYQLSDFILSNQNLFINKNILELGSGTGLVGIILDFIKPLKKVILTDYSPKVLKNLKFNMELNNLEIQDFINDDDDDNNNNVNKENDDKINQVRVLDWEIEDLNILNNYSGLNDSNIILGADIVYEPSLCKYLVSILYFLLERNENSVAYISSTIRNQSTFSIFQKELNLKNLTVIDITKQFEQSSPTSPFIYDRSQIVLYKIYLEKK</sequence>
<feature type="chain" id="PRO_0000348155" description="Putative uncharacterized protein DDB_G0277003">
    <location>
        <begin position="1"/>
        <end position="359"/>
    </location>
</feature>
<proteinExistence type="predicted"/>
<reference key="1">
    <citation type="journal article" date="2002" name="Nature">
        <title>Sequence and analysis of chromosome 2 of Dictyostelium discoideum.</title>
        <authorList>
            <person name="Gloeckner G."/>
            <person name="Eichinger L."/>
            <person name="Szafranski K."/>
            <person name="Pachebat J.A."/>
            <person name="Bankier A.T."/>
            <person name="Dear P.H."/>
            <person name="Lehmann R."/>
            <person name="Baumgart C."/>
            <person name="Parra G."/>
            <person name="Abril J.F."/>
            <person name="Guigo R."/>
            <person name="Kumpf K."/>
            <person name="Tunggal B."/>
            <person name="Cox E.C."/>
            <person name="Quail M.A."/>
            <person name="Platzer M."/>
            <person name="Rosenthal A."/>
            <person name="Noegel A.A."/>
        </authorList>
    </citation>
    <scope>NUCLEOTIDE SEQUENCE [LARGE SCALE GENOMIC DNA]</scope>
    <source>
        <strain>AX4</strain>
    </source>
</reference>
<reference key="2">
    <citation type="journal article" date="2005" name="Nature">
        <title>The genome of the social amoeba Dictyostelium discoideum.</title>
        <authorList>
            <person name="Eichinger L."/>
            <person name="Pachebat J.A."/>
            <person name="Gloeckner G."/>
            <person name="Rajandream M.A."/>
            <person name="Sucgang R."/>
            <person name="Berriman M."/>
            <person name="Song J."/>
            <person name="Olsen R."/>
            <person name="Szafranski K."/>
            <person name="Xu Q."/>
            <person name="Tunggal B."/>
            <person name="Kummerfeld S."/>
            <person name="Madera M."/>
            <person name="Konfortov B.A."/>
            <person name="Rivero F."/>
            <person name="Bankier A.T."/>
            <person name="Lehmann R."/>
            <person name="Hamlin N."/>
            <person name="Davies R."/>
            <person name="Gaudet P."/>
            <person name="Fey P."/>
            <person name="Pilcher K."/>
            <person name="Chen G."/>
            <person name="Saunders D."/>
            <person name="Sodergren E.J."/>
            <person name="Davis P."/>
            <person name="Kerhornou A."/>
            <person name="Nie X."/>
            <person name="Hall N."/>
            <person name="Anjard C."/>
            <person name="Hemphill L."/>
            <person name="Bason N."/>
            <person name="Farbrother P."/>
            <person name="Desany B."/>
            <person name="Just E."/>
            <person name="Morio T."/>
            <person name="Rost R."/>
            <person name="Churcher C.M."/>
            <person name="Cooper J."/>
            <person name="Haydock S."/>
            <person name="van Driessche N."/>
            <person name="Cronin A."/>
            <person name="Goodhead I."/>
            <person name="Muzny D.M."/>
            <person name="Mourier T."/>
            <person name="Pain A."/>
            <person name="Lu M."/>
            <person name="Harper D."/>
            <person name="Lindsay R."/>
            <person name="Hauser H."/>
            <person name="James K.D."/>
            <person name="Quiles M."/>
            <person name="Madan Babu M."/>
            <person name="Saito T."/>
            <person name="Buchrieser C."/>
            <person name="Wardroper A."/>
            <person name="Felder M."/>
            <person name="Thangavelu M."/>
            <person name="Johnson D."/>
            <person name="Knights A."/>
            <person name="Loulseged H."/>
            <person name="Mungall K.L."/>
            <person name="Oliver K."/>
            <person name="Price C."/>
            <person name="Quail M.A."/>
            <person name="Urushihara H."/>
            <person name="Hernandez J."/>
            <person name="Rabbinowitsch E."/>
            <person name="Steffen D."/>
            <person name="Sanders M."/>
            <person name="Ma J."/>
            <person name="Kohara Y."/>
            <person name="Sharp S."/>
            <person name="Simmonds M.N."/>
            <person name="Spiegler S."/>
            <person name="Tivey A."/>
            <person name="Sugano S."/>
            <person name="White B."/>
            <person name="Walker D."/>
            <person name="Woodward J.R."/>
            <person name="Winckler T."/>
            <person name="Tanaka Y."/>
            <person name="Shaulsky G."/>
            <person name="Schleicher M."/>
            <person name="Weinstock G.M."/>
            <person name="Rosenthal A."/>
            <person name="Cox E.C."/>
            <person name="Chisholm R.L."/>
            <person name="Gibbs R.A."/>
            <person name="Loomis W.F."/>
            <person name="Platzer M."/>
            <person name="Kay R.R."/>
            <person name="Williams J.G."/>
            <person name="Dear P.H."/>
            <person name="Noegel A.A."/>
            <person name="Barrell B.G."/>
            <person name="Kuspa A."/>
        </authorList>
    </citation>
    <scope>NUCLEOTIDE SEQUENCE [LARGE SCALE GENOMIC DNA]</scope>
    <source>
        <strain>AX4</strain>
    </source>
</reference>
<gene>
    <name type="ORF">DDB_G0277003</name>
</gene>
<protein>
    <recommendedName>
        <fullName>Putative uncharacterized protein DDB_G0277003</fullName>
    </recommendedName>
</protein>
<accession>Q86JB0</accession>
<accession>Q550T8</accession>
<accession>Q550T9</accession>
<evidence type="ECO:0000305" key="1"/>
<comment type="sequence caution" evidence="1">
    <conflict type="erroneous gene model prediction">
        <sequence resource="EMBL-CDS" id="EAL68953"/>
    </conflict>
</comment>
<comment type="sequence caution" evidence="1">
    <conflict type="erroneous gene model prediction">
        <sequence resource="EMBL-CDS" id="EAL69003"/>
    </conflict>
</comment>
<keyword id="KW-1185">Reference proteome</keyword>
<organism>
    <name type="scientific">Dictyostelium discoideum</name>
    <name type="common">Social amoeba</name>
    <dbReference type="NCBI Taxonomy" id="44689"/>
    <lineage>
        <taxon>Eukaryota</taxon>
        <taxon>Amoebozoa</taxon>
        <taxon>Evosea</taxon>
        <taxon>Eumycetozoa</taxon>
        <taxon>Dictyostelia</taxon>
        <taxon>Dictyosteliales</taxon>
        <taxon>Dictyosteliaceae</taxon>
        <taxon>Dictyostelium</taxon>
    </lineage>
</organism>
<dbReference type="EMBL" id="AAFI02000019">
    <property type="protein sequence ID" value="EAL68953.1"/>
    <property type="status" value="ALT_SEQ"/>
    <property type="molecule type" value="Genomic_DNA"/>
</dbReference>
<dbReference type="EMBL" id="AAFI02000019">
    <property type="protein sequence ID" value="EAL69003.1"/>
    <property type="status" value="ALT_SEQ"/>
    <property type="molecule type" value="Genomic_DNA"/>
</dbReference>
<dbReference type="RefSeq" id="XP_642843.1">
    <property type="nucleotide sequence ID" value="XM_637751.1"/>
</dbReference>
<dbReference type="RefSeq" id="XP_642844.1">
    <property type="nucleotide sequence ID" value="XM_637752.1"/>
</dbReference>
<dbReference type="SMR" id="Q86JB0"/>
<dbReference type="FunCoup" id="Q86JB0">
    <property type="interactions" value="298"/>
</dbReference>
<dbReference type="STRING" id="44689.Q86JB0"/>
<dbReference type="PaxDb" id="44689-DDB0202677"/>
<dbReference type="EnsemblProtists" id="EAL68953">
    <property type="protein sequence ID" value="EAL68953"/>
    <property type="gene ID" value="DDB_G0276903"/>
</dbReference>
<dbReference type="EnsemblProtists" id="EAL69003">
    <property type="protein sequence ID" value="EAL69003"/>
    <property type="gene ID" value="DDB_G0277003"/>
</dbReference>
<dbReference type="GeneID" id="8620708"/>
<dbReference type="KEGG" id="ddi:DDB_G0276903"/>
<dbReference type="KEGG" id="ddi:DDB_G0277003"/>
<dbReference type="dictyBase" id="DDB_G0277003"/>
<dbReference type="VEuPathDB" id="AmoebaDB:DDB_G0276903"/>
<dbReference type="VEuPathDB" id="AmoebaDB:DDB_G0277003"/>
<dbReference type="eggNOG" id="KOG2497">
    <property type="taxonomic scope" value="Eukaryota"/>
</dbReference>
<dbReference type="InParanoid" id="Q86JB0"/>
<dbReference type="PRO" id="PR:Q86JB0"/>
<dbReference type="Proteomes" id="UP000002195">
    <property type="component" value="Chromosome 2"/>
</dbReference>
<dbReference type="GO" id="GO:0008276">
    <property type="term" value="F:protein methyltransferase activity"/>
    <property type="evidence" value="ECO:0000318"/>
    <property type="project" value="GO_Central"/>
</dbReference>
<dbReference type="CDD" id="cd02440">
    <property type="entry name" value="AdoMet_MTases"/>
    <property type="match status" value="1"/>
</dbReference>
<dbReference type="Gene3D" id="3.40.50.150">
    <property type="entry name" value="Vaccinia Virus protein VP39"/>
    <property type="match status" value="1"/>
</dbReference>
<dbReference type="InterPro" id="IPR019410">
    <property type="entry name" value="Methyltransf_16"/>
</dbReference>
<dbReference type="InterPro" id="IPR029063">
    <property type="entry name" value="SAM-dependent_MTases_sf"/>
</dbReference>
<dbReference type="PANTHER" id="PTHR14614">
    <property type="entry name" value="HEPATOCELLULAR CARCINOMA-ASSOCIATED ANTIGEN"/>
    <property type="match status" value="1"/>
</dbReference>
<dbReference type="PANTHER" id="PTHR14614:SF130">
    <property type="entry name" value="PROTEIN-LYSINE N-METHYLTRANSFERASE EEF2KMT"/>
    <property type="match status" value="1"/>
</dbReference>
<dbReference type="Pfam" id="PF10294">
    <property type="entry name" value="Methyltransf_16"/>
    <property type="match status" value="2"/>
</dbReference>
<dbReference type="SUPFAM" id="SSF53335">
    <property type="entry name" value="S-adenosyl-L-methionine-dependent methyltransferases"/>
    <property type="match status" value="1"/>
</dbReference>